<dbReference type="EC" id="2.7.4.3" evidence="1"/>
<dbReference type="EMBL" id="CP001398">
    <property type="protein sequence ID" value="ACS33442.1"/>
    <property type="molecule type" value="Genomic_DNA"/>
</dbReference>
<dbReference type="RefSeq" id="WP_015858556.1">
    <property type="nucleotide sequence ID" value="NC_012804.1"/>
</dbReference>
<dbReference type="SMR" id="C5A5D0"/>
<dbReference type="STRING" id="593117.TGAM_0940"/>
<dbReference type="PaxDb" id="593117-TGAM_0940"/>
<dbReference type="GeneID" id="7986897"/>
<dbReference type="KEGG" id="tga:TGAM_0940"/>
<dbReference type="PATRIC" id="fig|593117.10.peg.934"/>
<dbReference type="eggNOG" id="arCOG01046">
    <property type="taxonomic scope" value="Archaea"/>
</dbReference>
<dbReference type="HOGENOM" id="CLU_032354_1_2_2"/>
<dbReference type="OrthoDB" id="31230at2157"/>
<dbReference type="UniPathway" id="UPA00588">
    <property type="reaction ID" value="UER00649"/>
</dbReference>
<dbReference type="Proteomes" id="UP000001488">
    <property type="component" value="Chromosome"/>
</dbReference>
<dbReference type="GO" id="GO:0005737">
    <property type="term" value="C:cytoplasm"/>
    <property type="evidence" value="ECO:0007669"/>
    <property type="project" value="UniProtKB-SubCell"/>
</dbReference>
<dbReference type="GO" id="GO:0004017">
    <property type="term" value="F:adenylate kinase activity"/>
    <property type="evidence" value="ECO:0007669"/>
    <property type="project" value="UniProtKB-UniRule"/>
</dbReference>
<dbReference type="GO" id="GO:0005524">
    <property type="term" value="F:ATP binding"/>
    <property type="evidence" value="ECO:0007669"/>
    <property type="project" value="UniProtKB-UniRule"/>
</dbReference>
<dbReference type="GO" id="GO:0008270">
    <property type="term" value="F:zinc ion binding"/>
    <property type="evidence" value="ECO:0007669"/>
    <property type="project" value="UniProtKB-UniRule"/>
</dbReference>
<dbReference type="GO" id="GO:0044209">
    <property type="term" value="P:AMP salvage"/>
    <property type="evidence" value="ECO:0007669"/>
    <property type="project" value="UniProtKB-UniRule"/>
</dbReference>
<dbReference type="CDD" id="cd01428">
    <property type="entry name" value="ADK"/>
    <property type="match status" value="1"/>
</dbReference>
<dbReference type="FunFam" id="3.40.50.300:FF:000106">
    <property type="entry name" value="Adenylate kinase mitochondrial"/>
    <property type="match status" value="1"/>
</dbReference>
<dbReference type="Gene3D" id="3.40.50.300">
    <property type="entry name" value="P-loop containing nucleotide triphosphate hydrolases"/>
    <property type="match status" value="1"/>
</dbReference>
<dbReference type="HAMAP" id="MF_00235">
    <property type="entry name" value="Adenylate_kinase_Adk"/>
    <property type="match status" value="1"/>
</dbReference>
<dbReference type="InterPro" id="IPR006259">
    <property type="entry name" value="Adenyl_kin_sub"/>
</dbReference>
<dbReference type="InterPro" id="IPR000850">
    <property type="entry name" value="Adenylat/UMP-CMP_kin"/>
</dbReference>
<dbReference type="InterPro" id="IPR033690">
    <property type="entry name" value="Adenylat_kinase_CS"/>
</dbReference>
<dbReference type="InterPro" id="IPR007862">
    <property type="entry name" value="Adenylate_kinase_lid-dom"/>
</dbReference>
<dbReference type="InterPro" id="IPR027417">
    <property type="entry name" value="P-loop_NTPase"/>
</dbReference>
<dbReference type="NCBIfam" id="TIGR01351">
    <property type="entry name" value="adk"/>
    <property type="match status" value="1"/>
</dbReference>
<dbReference type="NCBIfam" id="NF001387">
    <property type="entry name" value="PRK00279.2-5"/>
    <property type="match status" value="1"/>
</dbReference>
<dbReference type="PANTHER" id="PTHR23359">
    <property type="entry name" value="NUCLEOTIDE KINASE"/>
    <property type="match status" value="1"/>
</dbReference>
<dbReference type="Pfam" id="PF00406">
    <property type="entry name" value="ADK"/>
    <property type="match status" value="1"/>
</dbReference>
<dbReference type="Pfam" id="PF05191">
    <property type="entry name" value="ADK_lid"/>
    <property type="match status" value="1"/>
</dbReference>
<dbReference type="PRINTS" id="PR00094">
    <property type="entry name" value="ADENYLTKNASE"/>
</dbReference>
<dbReference type="SUPFAM" id="SSF52540">
    <property type="entry name" value="P-loop containing nucleoside triphosphate hydrolases"/>
    <property type="match status" value="1"/>
</dbReference>
<dbReference type="PROSITE" id="PS00113">
    <property type="entry name" value="ADENYLATE_KINASE"/>
    <property type="match status" value="1"/>
</dbReference>
<protein>
    <recommendedName>
        <fullName evidence="1">Adenylate kinase</fullName>
        <shortName evidence="1">AK</shortName>
        <ecNumber evidence="1">2.7.4.3</ecNumber>
    </recommendedName>
    <alternativeName>
        <fullName evidence="1">ATP-AMP transphosphorylase</fullName>
    </alternativeName>
    <alternativeName>
        <fullName evidence="1">ATP:AMP phosphotransferase</fullName>
    </alternativeName>
    <alternativeName>
        <fullName evidence="1">Adenylate monophosphate kinase</fullName>
    </alternativeName>
</protein>
<sequence length="224" mass="25992">MNILIFGPPGSGKSTHSRRIVEEYGLTYISSGDLIRGEIERKSSLGLEMAAYLSRGDLIPDTIVNTLIISRLRRQRENFILDGYPRTPEQVIALENYLYDHGIRLDLALEIFIDEDTSVERISGRRICPNCGAVYHITYNPPKVPGICDVCGTKLIQRTDDREEVVRKRYRIYIKNMEPIIKFYRAKGIYVRVDGDGLIPDVWKRIKPLLDYIHEREKKRKEHE</sequence>
<keyword id="KW-0067">ATP-binding</keyword>
<keyword id="KW-0963">Cytoplasm</keyword>
<keyword id="KW-0418">Kinase</keyword>
<keyword id="KW-0479">Metal-binding</keyword>
<keyword id="KW-0545">Nucleotide biosynthesis</keyword>
<keyword id="KW-0547">Nucleotide-binding</keyword>
<keyword id="KW-1185">Reference proteome</keyword>
<keyword id="KW-0808">Transferase</keyword>
<keyword id="KW-0862">Zinc</keyword>
<reference key="1">
    <citation type="journal article" date="2007" name="Genome Biol.">
        <title>Genome analysis and genome-wide proteomics of Thermococcus gammatolerans, the most radioresistant organism known amongst the Archaea.</title>
        <authorList>
            <person name="Zivanovic Y."/>
            <person name="Armengaud J."/>
            <person name="Lagorce A."/>
            <person name="Leplat C."/>
            <person name="Guerin P."/>
            <person name="Dutertre M."/>
            <person name="Anthouard V."/>
            <person name="Forterre P."/>
            <person name="Wincker P."/>
            <person name="Confalonieri F."/>
        </authorList>
    </citation>
    <scope>NUCLEOTIDE SEQUENCE [LARGE SCALE GENOMIC DNA]</scope>
    <source>
        <strain>DSM 15229 / JCM 11827 / EJ3</strain>
    </source>
</reference>
<accession>C5A5D0</accession>
<evidence type="ECO:0000255" key="1">
    <source>
        <dbReference type="HAMAP-Rule" id="MF_00235"/>
    </source>
</evidence>
<feature type="chain" id="PRO_1000204429" description="Adenylate kinase">
    <location>
        <begin position="1"/>
        <end position="224"/>
    </location>
</feature>
<feature type="region of interest" description="NMP" evidence="1">
    <location>
        <begin position="30"/>
        <end position="59"/>
    </location>
</feature>
<feature type="region of interest" description="LID" evidence="1">
    <location>
        <begin position="124"/>
        <end position="161"/>
    </location>
</feature>
<feature type="binding site" evidence="1">
    <location>
        <begin position="10"/>
        <end position="15"/>
    </location>
    <ligand>
        <name>ATP</name>
        <dbReference type="ChEBI" id="CHEBI:30616"/>
    </ligand>
</feature>
<feature type="binding site" evidence="1">
    <location>
        <position position="31"/>
    </location>
    <ligand>
        <name>AMP</name>
        <dbReference type="ChEBI" id="CHEBI:456215"/>
    </ligand>
</feature>
<feature type="binding site" evidence="1">
    <location>
        <position position="36"/>
    </location>
    <ligand>
        <name>AMP</name>
        <dbReference type="ChEBI" id="CHEBI:456215"/>
    </ligand>
</feature>
<feature type="binding site" evidence="1">
    <location>
        <begin position="57"/>
        <end position="59"/>
    </location>
    <ligand>
        <name>AMP</name>
        <dbReference type="ChEBI" id="CHEBI:456215"/>
    </ligand>
</feature>
<feature type="binding site" evidence="1">
    <location>
        <begin position="83"/>
        <end position="86"/>
    </location>
    <ligand>
        <name>AMP</name>
        <dbReference type="ChEBI" id="CHEBI:456215"/>
    </ligand>
</feature>
<feature type="binding site" evidence="1">
    <location>
        <position position="90"/>
    </location>
    <ligand>
        <name>AMP</name>
        <dbReference type="ChEBI" id="CHEBI:456215"/>
    </ligand>
</feature>
<feature type="binding site" evidence="1">
    <location>
        <position position="125"/>
    </location>
    <ligand>
        <name>ATP</name>
        <dbReference type="ChEBI" id="CHEBI:30616"/>
    </ligand>
</feature>
<feature type="binding site" evidence="1">
    <location>
        <position position="128"/>
    </location>
    <ligand>
        <name>Zn(2+)</name>
        <dbReference type="ChEBI" id="CHEBI:29105"/>
        <note>structural</note>
    </ligand>
</feature>
<feature type="binding site" evidence="1">
    <location>
        <position position="131"/>
    </location>
    <ligand>
        <name>Zn(2+)</name>
        <dbReference type="ChEBI" id="CHEBI:29105"/>
        <note>structural</note>
    </ligand>
</feature>
<feature type="binding site" evidence="1">
    <location>
        <begin position="134"/>
        <end position="135"/>
    </location>
    <ligand>
        <name>ATP</name>
        <dbReference type="ChEBI" id="CHEBI:30616"/>
    </ligand>
</feature>
<feature type="binding site" evidence="1">
    <location>
        <position position="148"/>
    </location>
    <ligand>
        <name>Zn(2+)</name>
        <dbReference type="ChEBI" id="CHEBI:29105"/>
        <note>structural</note>
    </ligand>
</feature>
<feature type="binding site" evidence="1">
    <location>
        <position position="151"/>
    </location>
    <ligand>
        <name>Zn(2+)</name>
        <dbReference type="ChEBI" id="CHEBI:29105"/>
        <note>structural</note>
    </ligand>
</feature>
<feature type="binding site" evidence="1">
    <location>
        <position position="158"/>
    </location>
    <ligand>
        <name>AMP</name>
        <dbReference type="ChEBI" id="CHEBI:456215"/>
    </ligand>
</feature>
<feature type="binding site" evidence="1">
    <location>
        <position position="169"/>
    </location>
    <ligand>
        <name>AMP</name>
        <dbReference type="ChEBI" id="CHEBI:456215"/>
    </ligand>
</feature>
<feature type="binding site" evidence="1">
    <location>
        <position position="197"/>
    </location>
    <ligand>
        <name>ATP</name>
        <dbReference type="ChEBI" id="CHEBI:30616"/>
    </ligand>
</feature>
<organism>
    <name type="scientific">Thermococcus gammatolerans (strain DSM 15229 / JCM 11827 / EJ3)</name>
    <dbReference type="NCBI Taxonomy" id="593117"/>
    <lineage>
        <taxon>Archaea</taxon>
        <taxon>Methanobacteriati</taxon>
        <taxon>Methanobacteriota</taxon>
        <taxon>Thermococci</taxon>
        <taxon>Thermococcales</taxon>
        <taxon>Thermococcaceae</taxon>
        <taxon>Thermococcus</taxon>
    </lineage>
</organism>
<comment type="function">
    <text evidence="1">Catalyzes the reversible transfer of the terminal phosphate group between ATP and AMP. Plays an important role in cellular energy homeostasis and in adenine nucleotide metabolism.</text>
</comment>
<comment type="catalytic activity">
    <reaction evidence="1">
        <text>AMP + ATP = 2 ADP</text>
        <dbReference type="Rhea" id="RHEA:12973"/>
        <dbReference type="ChEBI" id="CHEBI:30616"/>
        <dbReference type="ChEBI" id="CHEBI:456215"/>
        <dbReference type="ChEBI" id="CHEBI:456216"/>
        <dbReference type="EC" id="2.7.4.3"/>
    </reaction>
</comment>
<comment type="pathway">
    <text evidence="1">Purine metabolism; AMP biosynthesis via salvage pathway; AMP from ADP: step 1/1.</text>
</comment>
<comment type="subunit">
    <text evidence="1">Monomer.</text>
</comment>
<comment type="subcellular location">
    <subcellularLocation>
        <location evidence="1">Cytoplasm</location>
    </subcellularLocation>
</comment>
<comment type="domain">
    <text evidence="1">Consists of three domains, a large central CORE domain and two small peripheral domains, NMPbind and LID, which undergo movements during catalysis. The LID domain closes over the site of phosphoryl transfer upon ATP binding. Assembling and dissambling the active center during each catalytic cycle provides an effective means to prevent ATP hydrolysis. Some bacteria have evolved a zinc-coordinating structure that stabilizes the LID domain.</text>
</comment>
<comment type="similarity">
    <text evidence="1">Belongs to the adenylate kinase family.</text>
</comment>
<proteinExistence type="inferred from homology"/>
<name>KAD_THEGJ</name>
<gene>
    <name evidence="1" type="primary">adk</name>
    <name type="ordered locus">TGAM_0940</name>
</gene>